<keyword id="KW-0678">Repressor</keyword>
<keyword id="KW-0346">Stress response</keyword>
<keyword id="KW-0804">Transcription</keyword>
<keyword id="KW-0805">Transcription regulation</keyword>
<protein>
    <recommendedName>
        <fullName evidence="1">Heat-inducible transcription repressor HrcA</fullName>
    </recommendedName>
</protein>
<sequence>MITQRQLSILNAIVEDYVDLGQPIGSKALIDRHHLDVSPATIRNEMKQLEDLNFLEKTHSSSGRSPSEEGFRLYVDQLLKQTSRQNKNKIQRLNQLLIENHYDISSALSYFANELSMKSHYATLVVRPKHSEEMINNVHLIKANDSIMILVIIYNSGHVEHFHLNSALELSSDRLIAISNFISNNNIEISAKLSDKIRSFANSNEENQFINDIVKMINSHISKQSNSIFLGGKVKLIDALNESNVSSIQPILQYLESERITELLQTISTNDINVKIGKEIDESLSDISIVTSQYHFDNSLKGQIAVIGPTAMRYQNVIQLLNQIW</sequence>
<organism>
    <name type="scientific">Staphylococcus haemolyticus (strain JCSC1435)</name>
    <dbReference type="NCBI Taxonomy" id="279808"/>
    <lineage>
        <taxon>Bacteria</taxon>
        <taxon>Bacillati</taxon>
        <taxon>Bacillota</taxon>
        <taxon>Bacilli</taxon>
        <taxon>Bacillales</taxon>
        <taxon>Staphylococcaceae</taxon>
        <taxon>Staphylococcus</taxon>
    </lineage>
</organism>
<gene>
    <name evidence="1" type="primary">hrcA</name>
    <name type="ordered locus">SH1334</name>
</gene>
<reference key="1">
    <citation type="journal article" date="2005" name="J. Bacteriol.">
        <title>Whole-genome sequencing of Staphylococcus haemolyticus uncovers the extreme plasticity of its genome and the evolution of human-colonizing staphylococcal species.</title>
        <authorList>
            <person name="Takeuchi F."/>
            <person name="Watanabe S."/>
            <person name="Baba T."/>
            <person name="Yuzawa H."/>
            <person name="Ito T."/>
            <person name="Morimoto Y."/>
            <person name="Kuroda M."/>
            <person name="Cui L."/>
            <person name="Takahashi M."/>
            <person name="Ankai A."/>
            <person name="Baba S."/>
            <person name="Fukui S."/>
            <person name="Lee J.C."/>
            <person name="Hiramatsu K."/>
        </authorList>
    </citation>
    <scope>NUCLEOTIDE SEQUENCE [LARGE SCALE GENOMIC DNA]</scope>
    <source>
        <strain>JCSC1435</strain>
    </source>
</reference>
<evidence type="ECO:0000255" key="1">
    <source>
        <dbReference type="HAMAP-Rule" id="MF_00081"/>
    </source>
</evidence>
<comment type="function">
    <text evidence="1">Negative regulator of class I heat shock genes (grpE-dnaK-dnaJ and groELS operons). Prevents heat-shock induction of these operons.</text>
</comment>
<comment type="similarity">
    <text evidence="1">Belongs to the HrcA family.</text>
</comment>
<dbReference type="EMBL" id="AP006716">
    <property type="protein sequence ID" value="BAE04643.1"/>
    <property type="molecule type" value="Genomic_DNA"/>
</dbReference>
<dbReference type="RefSeq" id="WP_011275631.1">
    <property type="nucleotide sequence ID" value="NC_007168.1"/>
</dbReference>
<dbReference type="SMR" id="Q4L6T2"/>
<dbReference type="KEGG" id="sha:SH1334"/>
<dbReference type="eggNOG" id="COG1420">
    <property type="taxonomic scope" value="Bacteria"/>
</dbReference>
<dbReference type="HOGENOM" id="CLU_050019_1_0_9"/>
<dbReference type="OrthoDB" id="9783139at2"/>
<dbReference type="Proteomes" id="UP000000543">
    <property type="component" value="Chromosome"/>
</dbReference>
<dbReference type="GO" id="GO:0003677">
    <property type="term" value="F:DNA binding"/>
    <property type="evidence" value="ECO:0007669"/>
    <property type="project" value="InterPro"/>
</dbReference>
<dbReference type="GO" id="GO:0045892">
    <property type="term" value="P:negative regulation of DNA-templated transcription"/>
    <property type="evidence" value="ECO:0007669"/>
    <property type="project" value="UniProtKB-UniRule"/>
</dbReference>
<dbReference type="Gene3D" id="3.30.450.40">
    <property type="match status" value="1"/>
</dbReference>
<dbReference type="Gene3D" id="3.30.390.60">
    <property type="entry name" value="Heat-inducible transcription repressor hrca homolog, domain 3"/>
    <property type="match status" value="1"/>
</dbReference>
<dbReference type="Gene3D" id="1.10.10.10">
    <property type="entry name" value="Winged helix-like DNA-binding domain superfamily/Winged helix DNA-binding domain"/>
    <property type="match status" value="1"/>
</dbReference>
<dbReference type="HAMAP" id="MF_00081">
    <property type="entry name" value="HrcA"/>
    <property type="match status" value="1"/>
</dbReference>
<dbReference type="InterPro" id="IPR029016">
    <property type="entry name" value="GAF-like_dom_sf"/>
</dbReference>
<dbReference type="InterPro" id="IPR002571">
    <property type="entry name" value="HrcA"/>
</dbReference>
<dbReference type="InterPro" id="IPR021153">
    <property type="entry name" value="HrcA_C"/>
</dbReference>
<dbReference type="InterPro" id="IPR036388">
    <property type="entry name" value="WH-like_DNA-bd_sf"/>
</dbReference>
<dbReference type="InterPro" id="IPR036390">
    <property type="entry name" value="WH_DNA-bd_sf"/>
</dbReference>
<dbReference type="InterPro" id="IPR023120">
    <property type="entry name" value="WHTH_transcript_rep_HrcA_IDD"/>
</dbReference>
<dbReference type="NCBIfam" id="TIGR00331">
    <property type="entry name" value="hrcA"/>
    <property type="match status" value="1"/>
</dbReference>
<dbReference type="PANTHER" id="PTHR34824">
    <property type="entry name" value="HEAT-INDUCIBLE TRANSCRIPTION REPRESSOR HRCA"/>
    <property type="match status" value="1"/>
</dbReference>
<dbReference type="PANTHER" id="PTHR34824:SF1">
    <property type="entry name" value="HEAT-INDUCIBLE TRANSCRIPTION REPRESSOR HRCA"/>
    <property type="match status" value="1"/>
</dbReference>
<dbReference type="Pfam" id="PF01628">
    <property type="entry name" value="HrcA"/>
    <property type="match status" value="1"/>
</dbReference>
<dbReference type="PIRSF" id="PIRSF005485">
    <property type="entry name" value="HrcA"/>
    <property type="match status" value="1"/>
</dbReference>
<dbReference type="SUPFAM" id="SSF55781">
    <property type="entry name" value="GAF domain-like"/>
    <property type="match status" value="1"/>
</dbReference>
<dbReference type="SUPFAM" id="SSF46785">
    <property type="entry name" value="Winged helix' DNA-binding domain"/>
    <property type="match status" value="1"/>
</dbReference>
<accession>Q4L6T2</accession>
<feature type="chain" id="PRO_1000010453" description="Heat-inducible transcription repressor HrcA">
    <location>
        <begin position="1"/>
        <end position="325"/>
    </location>
</feature>
<proteinExistence type="inferred from homology"/>
<name>HRCA_STAHJ</name>